<protein>
    <recommendedName>
        <fullName evidence="7">Protein IQ-DOMAIN 28</fullName>
        <shortName evidence="7">AtIQD28</shortName>
    </recommendedName>
</protein>
<evidence type="ECO:0000250" key="1">
    <source>
        <dbReference type="UniProtKB" id="Q9SF32"/>
    </source>
</evidence>
<evidence type="ECO:0000255" key="2">
    <source>
        <dbReference type="PROSITE-ProRule" id="PRU00116"/>
    </source>
</evidence>
<evidence type="ECO:0000255" key="3">
    <source>
        <dbReference type="PROSITE-ProRule" id="PRU00768"/>
    </source>
</evidence>
<evidence type="ECO:0000256" key="4">
    <source>
        <dbReference type="SAM" id="MobiDB-lite"/>
    </source>
</evidence>
<evidence type="ECO:0000269" key="5">
    <source>
    </source>
</evidence>
<evidence type="ECO:0000269" key="6">
    <source>
    </source>
</evidence>
<evidence type="ECO:0000303" key="7">
    <source>
    </source>
</evidence>
<evidence type="ECO:0000305" key="8"/>
<evidence type="ECO:0000312" key="9">
    <source>
        <dbReference type="Araport" id="AT1G14380"/>
    </source>
</evidence>
<evidence type="ECO:0000312" key="10">
    <source>
        <dbReference type="EMBL" id="AAF43938.1"/>
    </source>
</evidence>
<reference key="1">
    <citation type="journal article" date="2000" name="Nature">
        <title>Sequence and analysis of chromosome 1 of the plant Arabidopsis thaliana.</title>
        <authorList>
            <person name="Theologis A."/>
            <person name="Ecker J.R."/>
            <person name="Palm C.J."/>
            <person name="Federspiel N.A."/>
            <person name="Kaul S."/>
            <person name="White O."/>
            <person name="Alonso J."/>
            <person name="Altafi H."/>
            <person name="Araujo R."/>
            <person name="Bowman C.L."/>
            <person name="Brooks S.Y."/>
            <person name="Buehler E."/>
            <person name="Chan A."/>
            <person name="Chao Q."/>
            <person name="Chen H."/>
            <person name="Cheuk R.F."/>
            <person name="Chin C.W."/>
            <person name="Chung M.K."/>
            <person name="Conn L."/>
            <person name="Conway A.B."/>
            <person name="Conway A.R."/>
            <person name="Creasy T.H."/>
            <person name="Dewar K."/>
            <person name="Dunn P."/>
            <person name="Etgu P."/>
            <person name="Feldblyum T.V."/>
            <person name="Feng J.-D."/>
            <person name="Fong B."/>
            <person name="Fujii C.Y."/>
            <person name="Gill J.E."/>
            <person name="Goldsmith A.D."/>
            <person name="Haas B."/>
            <person name="Hansen N.F."/>
            <person name="Hughes B."/>
            <person name="Huizar L."/>
            <person name="Hunter J.L."/>
            <person name="Jenkins J."/>
            <person name="Johnson-Hopson C."/>
            <person name="Khan S."/>
            <person name="Khaykin E."/>
            <person name="Kim C.J."/>
            <person name="Koo H.L."/>
            <person name="Kremenetskaia I."/>
            <person name="Kurtz D.B."/>
            <person name="Kwan A."/>
            <person name="Lam B."/>
            <person name="Langin-Hooper S."/>
            <person name="Lee A."/>
            <person name="Lee J.M."/>
            <person name="Lenz C.A."/>
            <person name="Li J.H."/>
            <person name="Li Y.-P."/>
            <person name="Lin X."/>
            <person name="Liu S.X."/>
            <person name="Liu Z.A."/>
            <person name="Luros J.S."/>
            <person name="Maiti R."/>
            <person name="Marziali A."/>
            <person name="Militscher J."/>
            <person name="Miranda M."/>
            <person name="Nguyen M."/>
            <person name="Nierman W.C."/>
            <person name="Osborne B.I."/>
            <person name="Pai G."/>
            <person name="Peterson J."/>
            <person name="Pham P.K."/>
            <person name="Rizzo M."/>
            <person name="Rooney T."/>
            <person name="Rowley D."/>
            <person name="Sakano H."/>
            <person name="Salzberg S.L."/>
            <person name="Schwartz J.R."/>
            <person name="Shinn P."/>
            <person name="Southwick A.M."/>
            <person name="Sun H."/>
            <person name="Tallon L.J."/>
            <person name="Tambunga G."/>
            <person name="Toriumi M.J."/>
            <person name="Town C.D."/>
            <person name="Utterback T."/>
            <person name="Van Aken S."/>
            <person name="Vaysberg M."/>
            <person name="Vysotskaia V.S."/>
            <person name="Walker M."/>
            <person name="Wu D."/>
            <person name="Yu G."/>
            <person name="Fraser C.M."/>
            <person name="Venter J.C."/>
            <person name="Davis R.W."/>
        </authorList>
    </citation>
    <scope>NUCLEOTIDE SEQUENCE [LARGE SCALE GENOMIC DNA]</scope>
    <source>
        <strain>cv. Columbia</strain>
    </source>
</reference>
<reference key="2">
    <citation type="journal article" date="2017" name="Plant J.">
        <title>Araport11: a complete reannotation of the Arabidopsis thaliana reference genome.</title>
        <authorList>
            <person name="Cheng C.Y."/>
            <person name="Krishnakumar V."/>
            <person name="Chan A.P."/>
            <person name="Thibaud-Nissen F."/>
            <person name="Schobel S."/>
            <person name="Town C.D."/>
        </authorList>
    </citation>
    <scope>GENOME REANNOTATION</scope>
    <source>
        <strain>cv. Columbia</strain>
    </source>
</reference>
<reference key="3">
    <citation type="journal article" date="2002" name="Science">
        <title>Functional annotation of a full-length Arabidopsis cDNA collection.</title>
        <authorList>
            <person name="Seki M."/>
            <person name="Narusaka M."/>
            <person name="Kamiya A."/>
            <person name="Ishida J."/>
            <person name="Satou M."/>
            <person name="Sakurai T."/>
            <person name="Nakajima M."/>
            <person name="Enju A."/>
            <person name="Akiyama K."/>
            <person name="Oono Y."/>
            <person name="Muramatsu M."/>
            <person name="Hayashizaki Y."/>
            <person name="Kawai J."/>
            <person name="Carninci P."/>
            <person name="Itoh M."/>
            <person name="Ishii Y."/>
            <person name="Arakawa T."/>
            <person name="Shibata K."/>
            <person name="Shinagawa A."/>
            <person name="Shinozaki K."/>
        </authorList>
    </citation>
    <scope>NUCLEOTIDE SEQUENCE [LARGE SCALE MRNA]</scope>
    <source>
        <strain>cv. Columbia</strain>
    </source>
</reference>
<reference key="4">
    <citation type="journal article" date="2003" name="Science">
        <title>Empirical analysis of transcriptional activity in the Arabidopsis genome.</title>
        <authorList>
            <person name="Yamada K."/>
            <person name="Lim J."/>
            <person name="Dale J.M."/>
            <person name="Chen H."/>
            <person name="Shinn P."/>
            <person name="Palm C.J."/>
            <person name="Southwick A.M."/>
            <person name="Wu H.C."/>
            <person name="Kim C.J."/>
            <person name="Nguyen M."/>
            <person name="Pham P.K."/>
            <person name="Cheuk R.F."/>
            <person name="Karlin-Newmann G."/>
            <person name="Liu S.X."/>
            <person name="Lam B."/>
            <person name="Sakano H."/>
            <person name="Wu T."/>
            <person name="Yu G."/>
            <person name="Miranda M."/>
            <person name="Quach H.L."/>
            <person name="Tripp M."/>
            <person name="Chang C.H."/>
            <person name="Lee J.M."/>
            <person name="Toriumi M.J."/>
            <person name="Chan M.M."/>
            <person name="Tang C.C."/>
            <person name="Onodera C.S."/>
            <person name="Deng J.M."/>
            <person name="Akiyama K."/>
            <person name="Ansari Y."/>
            <person name="Arakawa T."/>
            <person name="Banh J."/>
            <person name="Banno F."/>
            <person name="Bowser L."/>
            <person name="Brooks S.Y."/>
            <person name="Carninci P."/>
            <person name="Chao Q."/>
            <person name="Choy N."/>
            <person name="Enju A."/>
            <person name="Goldsmith A.D."/>
            <person name="Gurjal M."/>
            <person name="Hansen N.F."/>
            <person name="Hayashizaki Y."/>
            <person name="Johnson-Hopson C."/>
            <person name="Hsuan V.W."/>
            <person name="Iida K."/>
            <person name="Karnes M."/>
            <person name="Khan S."/>
            <person name="Koesema E."/>
            <person name="Ishida J."/>
            <person name="Jiang P.X."/>
            <person name="Jones T."/>
            <person name="Kawai J."/>
            <person name="Kamiya A."/>
            <person name="Meyers C."/>
            <person name="Nakajima M."/>
            <person name="Narusaka M."/>
            <person name="Seki M."/>
            <person name="Sakurai T."/>
            <person name="Satou M."/>
            <person name="Tamse R."/>
            <person name="Vaysberg M."/>
            <person name="Wallender E.K."/>
            <person name="Wong C."/>
            <person name="Yamamura Y."/>
            <person name="Yuan S."/>
            <person name="Shinozaki K."/>
            <person name="Davis R.W."/>
            <person name="Theologis A."/>
            <person name="Ecker J.R."/>
        </authorList>
    </citation>
    <scope>NUCLEOTIDE SEQUENCE [LARGE SCALE MRNA]</scope>
    <source>
        <strain>cv. Columbia</strain>
    </source>
</reference>
<reference key="5">
    <citation type="submission" date="2002-03" db="EMBL/GenBank/DDBJ databases">
        <title>Full-length cDNA from Arabidopsis thaliana.</title>
        <authorList>
            <person name="Brover V.V."/>
            <person name="Troukhan M.E."/>
            <person name="Alexandrov N.A."/>
            <person name="Lu Y.-P."/>
            <person name="Flavell R.B."/>
            <person name="Feldmann K.A."/>
        </authorList>
    </citation>
    <scope>NUCLEOTIDE SEQUENCE [LARGE SCALE MRNA]</scope>
</reference>
<reference key="6">
    <citation type="journal article" date="2005" name="BMC Evol. Biol.">
        <title>Genome-wide comparative analysis of the IQD gene families in Arabidopsis thaliana and Oryza sativa.</title>
        <authorList>
            <person name="Abel S."/>
            <person name="Savchenko T."/>
            <person name="Levy M."/>
        </authorList>
    </citation>
    <scope>INTERACTION WITH CALMODULIN</scope>
    <scope>GENE FAMILY</scope>
    <scope>NOMENCLATURE</scope>
    <source>
        <strain>cv. Columbia</strain>
    </source>
</reference>
<reference key="7">
    <citation type="journal article" date="2009" name="Plant Physiol.">
        <title>Large-scale Arabidopsis phosphoproteome profiling reveals novel chloroplast kinase substrates and phosphorylation networks.</title>
        <authorList>
            <person name="Reiland S."/>
            <person name="Messerli G."/>
            <person name="Baerenfaller K."/>
            <person name="Gerrits B."/>
            <person name="Endler A."/>
            <person name="Grossmann J."/>
            <person name="Gruissem W."/>
            <person name="Baginsky S."/>
        </authorList>
    </citation>
    <scope>IDENTIFICATION BY MASS SPECTROMETRY [LARGE SCALE ANALYSIS]</scope>
</reference>
<reference key="8">
    <citation type="journal article" date="2013" name="Plant Physiol.">
        <title>Purification and characterization of novel microtubule-associated proteins from Arabidopsis cell suspension cultures.</title>
        <authorList>
            <person name="Hamada T."/>
            <person name="Nagasaki-Takeuchi N."/>
            <person name="Kato T."/>
            <person name="Fujiwara M."/>
            <person name="Sonobe S."/>
            <person name="Fukao Y."/>
            <person name="Hashimoto T."/>
        </authorList>
    </citation>
    <scope>SUBCELLULAR LOCATION</scope>
</reference>
<reference key="9">
    <citation type="journal article" date="2017" name="Plant Physiol.">
        <title>The IQD family of calmodulin-binding proteins links calcium signaling to microtubules, membrane subdomains, and the nucleus.</title>
        <authorList>
            <person name="Buerstenbinder K."/>
            <person name="Moeller B."/>
            <person name="Ploetner R."/>
            <person name="Stamm G."/>
            <person name="Hause G."/>
            <person name="Mitra D."/>
            <person name="Abel S."/>
        </authorList>
    </citation>
    <scope>SUBCELLULAR LOCATION</scope>
    <source>
        <strain>cv. Columbia</strain>
    </source>
</reference>
<reference key="10">
    <citation type="journal article" date="2017" name="Plant Signal. Behav.">
        <title>Functions of IQD proteins as hubs in cellular calcium and auxin signaling: A toolbox for shape formation and tissue-specification in plants?</title>
        <authorList>
            <person name="Buerstenbinder K."/>
            <person name="Mitra D."/>
            <person name="Quegwer J."/>
        </authorList>
    </citation>
    <scope>REVIEW</scope>
</reference>
<name>IQD28_ARATH</name>
<accession>Q8GZ87</accession>
<accession>Q8LAE0</accession>
<accession>Q9M9S5</accession>
<comment type="function">
    <text evidence="1">May be involved in cooperative interactions with calmodulins or calmodulin-like proteins (By similarity). Recruits calmodulin proteins to microtubules, thus being a potential scaffold in cellular signaling and trafficking (By similarity). May associate with nucleic acids and regulate gene expression at the transcriptional or post-transcriptional level (By similarity).</text>
</comment>
<comment type="subunit">
    <text evidence="1">Binds to multiple calmodulin (CaM) in the presence of Ca(2+) and CaM-like proteins.</text>
</comment>
<comment type="subcellular location">
    <subcellularLocation>
        <location evidence="3 6">Nucleus</location>
    </subcellularLocation>
    <subcellularLocation>
        <location evidence="5 6">Cytoplasm</location>
        <location evidence="5 6">Cytoskeleton</location>
    </subcellularLocation>
    <text evidence="5">Associates to cortical microtubules (MTs).</text>
</comment>
<comment type="similarity">
    <text evidence="8">Belongs to the IQD family.</text>
</comment>
<comment type="sequence caution" evidence="8">
    <conflict type="erroneous gene model prediction">
        <sequence resource="EMBL-CDS" id="AAF43938"/>
    </conflict>
</comment>
<keyword id="KW-0112">Calmodulin-binding</keyword>
<keyword id="KW-0963">Cytoplasm</keyword>
<keyword id="KW-0206">Cytoskeleton</keyword>
<keyword id="KW-0539">Nucleus</keyword>
<keyword id="KW-1185">Reference proteome</keyword>
<keyword id="KW-0677">Repeat</keyword>
<feature type="chain" id="PRO_0000453133" description="Protein IQ-DOMAIN 28">
    <location>
        <begin position="1"/>
        <end position="664"/>
    </location>
</feature>
<feature type="domain" description="IQ 1" evidence="2">
    <location>
        <begin position="93"/>
        <end position="121"/>
    </location>
</feature>
<feature type="domain" description="IQ 2" evidence="2">
    <location>
        <begin position="122"/>
        <end position="140"/>
    </location>
</feature>
<feature type="domain" description="IQ 3" evidence="2">
    <location>
        <begin position="144"/>
        <end position="170"/>
    </location>
</feature>
<feature type="region of interest" description="Disordered" evidence="4">
    <location>
        <begin position="1"/>
        <end position="85"/>
    </location>
</feature>
<feature type="region of interest" description="Calmodulin-binding" evidence="7">
    <location>
        <begin position="106"/>
        <end position="116"/>
    </location>
</feature>
<feature type="region of interest" description="Disordered" evidence="4">
    <location>
        <begin position="244"/>
        <end position="488"/>
    </location>
</feature>
<feature type="region of interest" description="Disordered" evidence="4">
    <location>
        <begin position="502"/>
        <end position="573"/>
    </location>
</feature>
<feature type="region of interest" description="Disordered" evidence="4">
    <location>
        <begin position="637"/>
        <end position="664"/>
    </location>
</feature>
<feature type="short sequence motif" description="Nuclear localization signal 1" evidence="3">
    <location>
        <begin position="251"/>
        <end position="258"/>
    </location>
</feature>
<feature type="short sequence motif" description="Nuclear localization signal 2" evidence="3">
    <location>
        <begin position="351"/>
        <end position="358"/>
    </location>
</feature>
<feature type="compositionally biased region" description="Low complexity" evidence="4">
    <location>
        <begin position="51"/>
        <end position="64"/>
    </location>
</feature>
<feature type="compositionally biased region" description="Basic and acidic residues" evidence="4">
    <location>
        <begin position="76"/>
        <end position="85"/>
    </location>
</feature>
<feature type="compositionally biased region" description="Basic and acidic residues" evidence="4">
    <location>
        <begin position="305"/>
        <end position="315"/>
    </location>
</feature>
<feature type="compositionally biased region" description="Low complexity" evidence="4">
    <location>
        <begin position="339"/>
        <end position="353"/>
    </location>
</feature>
<feature type="compositionally biased region" description="Basic and acidic residues" evidence="4">
    <location>
        <begin position="358"/>
        <end position="367"/>
    </location>
</feature>
<feature type="compositionally biased region" description="Basic and acidic residues" evidence="4">
    <location>
        <begin position="427"/>
        <end position="447"/>
    </location>
</feature>
<feature type="compositionally biased region" description="Basic and acidic residues" evidence="4">
    <location>
        <begin position="502"/>
        <end position="532"/>
    </location>
</feature>
<feature type="compositionally biased region" description="Polar residues" evidence="4">
    <location>
        <begin position="536"/>
        <end position="547"/>
    </location>
</feature>
<feature type="compositionally biased region" description="Basic and acidic residues" evidence="4">
    <location>
        <begin position="652"/>
        <end position="664"/>
    </location>
</feature>
<feature type="sequence conflict" description="In Ref. 5; AAM65425." evidence="8" ref="5">
    <original>K</original>
    <variation>T</variation>
    <location>
        <position position="264"/>
    </location>
</feature>
<feature type="sequence conflict" description="In Ref. 5; AAM65425." evidence="8" ref="5">
    <original>A</original>
    <variation>E</variation>
    <location>
        <position position="314"/>
    </location>
</feature>
<feature type="sequence conflict" description="In Ref. 5; AAM65425." evidence="8" ref="5">
    <original>S</original>
    <variation>P</variation>
    <location>
        <position position="358"/>
    </location>
</feature>
<organism>
    <name type="scientific">Arabidopsis thaliana</name>
    <name type="common">Mouse-ear cress</name>
    <dbReference type="NCBI Taxonomy" id="3702"/>
    <lineage>
        <taxon>Eukaryota</taxon>
        <taxon>Viridiplantae</taxon>
        <taxon>Streptophyta</taxon>
        <taxon>Embryophyta</taxon>
        <taxon>Tracheophyta</taxon>
        <taxon>Spermatophyta</taxon>
        <taxon>Magnoliopsida</taxon>
        <taxon>eudicotyledons</taxon>
        <taxon>Gunneridae</taxon>
        <taxon>Pentapetalae</taxon>
        <taxon>rosids</taxon>
        <taxon>malvids</taxon>
        <taxon>Brassicales</taxon>
        <taxon>Brassicaceae</taxon>
        <taxon>Camelineae</taxon>
        <taxon>Arabidopsis</taxon>
    </lineage>
</organism>
<proteinExistence type="evidence at protein level"/>
<dbReference type="EMBL" id="AC012188">
    <property type="protein sequence ID" value="AAF43938.1"/>
    <property type="status" value="ALT_SEQ"/>
    <property type="molecule type" value="Genomic_DNA"/>
</dbReference>
<dbReference type="EMBL" id="CP002684">
    <property type="protein sequence ID" value="AEE29154.1"/>
    <property type="molecule type" value="Genomic_DNA"/>
</dbReference>
<dbReference type="EMBL" id="CP002684">
    <property type="protein sequence ID" value="AEE29156.1"/>
    <property type="molecule type" value="Genomic_DNA"/>
</dbReference>
<dbReference type="EMBL" id="CP002684">
    <property type="protein sequence ID" value="ANM61047.1"/>
    <property type="molecule type" value="Genomic_DNA"/>
</dbReference>
<dbReference type="EMBL" id="AK117145">
    <property type="protein sequence ID" value="BAC41823.1"/>
    <property type="molecule type" value="mRNA"/>
</dbReference>
<dbReference type="EMBL" id="BT005935">
    <property type="protein sequence ID" value="AAO64870.1"/>
    <property type="molecule type" value="mRNA"/>
</dbReference>
<dbReference type="EMBL" id="AY087873">
    <property type="protein sequence ID" value="AAM65425.1"/>
    <property type="molecule type" value="mRNA"/>
</dbReference>
<dbReference type="PIR" id="C86278">
    <property type="entry name" value="C86278"/>
</dbReference>
<dbReference type="RefSeq" id="NP_001031046.1">
    <property type="nucleotide sequence ID" value="NM_001035969.2"/>
</dbReference>
<dbReference type="RefSeq" id="NP_001323290.1">
    <property type="nucleotide sequence ID" value="NM_001332115.1"/>
</dbReference>
<dbReference type="RefSeq" id="NP_563950.1">
    <property type="nucleotide sequence ID" value="NM_101305.4"/>
</dbReference>
<dbReference type="SMR" id="Q8GZ87"/>
<dbReference type="FunCoup" id="Q8GZ87">
    <property type="interactions" value="209"/>
</dbReference>
<dbReference type="STRING" id="3702.Q8GZ87"/>
<dbReference type="iPTMnet" id="Q8GZ87"/>
<dbReference type="PaxDb" id="3702-AT1G14380.1"/>
<dbReference type="ProteomicsDB" id="189763"/>
<dbReference type="EnsemblPlants" id="AT1G14380.1">
    <property type="protein sequence ID" value="AT1G14380.1"/>
    <property type="gene ID" value="AT1G14380"/>
</dbReference>
<dbReference type="EnsemblPlants" id="AT1G14380.3">
    <property type="protein sequence ID" value="AT1G14380.3"/>
    <property type="gene ID" value="AT1G14380"/>
</dbReference>
<dbReference type="EnsemblPlants" id="AT1G14380.4">
    <property type="protein sequence ID" value="AT1G14380.4"/>
    <property type="gene ID" value="AT1G14380"/>
</dbReference>
<dbReference type="GeneID" id="838000"/>
<dbReference type="Gramene" id="AT1G14380.1">
    <property type="protein sequence ID" value="AT1G14380.1"/>
    <property type="gene ID" value="AT1G14380"/>
</dbReference>
<dbReference type="Gramene" id="AT1G14380.3">
    <property type="protein sequence ID" value="AT1G14380.3"/>
    <property type="gene ID" value="AT1G14380"/>
</dbReference>
<dbReference type="Gramene" id="AT1G14380.4">
    <property type="protein sequence ID" value="AT1G14380.4"/>
    <property type="gene ID" value="AT1G14380"/>
</dbReference>
<dbReference type="KEGG" id="ath:AT1G14380"/>
<dbReference type="Araport" id="AT1G14380"/>
<dbReference type="TAIR" id="AT1G14380">
    <property type="gene designation" value="IQD28"/>
</dbReference>
<dbReference type="eggNOG" id="ENOG502QTUQ">
    <property type="taxonomic scope" value="Eukaryota"/>
</dbReference>
<dbReference type="InParanoid" id="Q8GZ87"/>
<dbReference type="PhylomeDB" id="Q8GZ87"/>
<dbReference type="CD-CODE" id="4299E36E">
    <property type="entry name" value="Nucleolus"/>
</dbReference>
<dbReference type="PRO" id="PR:Q8GZ87"/>
<dbReference type="Proteomes" id="UP000006548">
    <property type="component" value="Chromosome 1"/>
</dbReference>
<dbReference type="ExpressionAtlas" id="Q8GZ87">
    <property type="expression patterns" value="baseline and differential"/>
</dbReference>
<dbReference type="GO" id="GO:0005737">
    <property type="term" value="C:cytoplasm"/>
    <property type="evidence" value="ECO:0007669"/>
    <property type="project" value="UniProtKB-KW"/>
</dbReference>
<dbReference type="GO" id="GO:0005576">
    <property type="term" value="C:extracellular region"/>
    <property type="evidence" value="ECO:0007005"/>
    <property type="project" value="TAIR"/>
</dbReference>
<dbReference type="GO" id="GO:0005875">
    <property type="term" value="C:microtubule associated complex"/>
    <property type="evidence" value="ECO:0000314"/>
    <property type="project" value="TAIR"/>
</dbReference>
<dbReference type="GO" id="GO:0005634">
    <property type="term" value="C:nucleus"/>
    <property type="evidence" value="ECO:0007669"/>
    <property type="project" value="UniProtKB-SubCell"/>
</dbReference>
<dbReference type="GO" id="GO:0005516">
    <property type="term" value="F:calmodulin binding"/>
    <property type="evidence" value="ECO:0007669"/>
    <property type="project" value="UniProtKB-KW"/>
</dbReference>
<dbReference type="CDD" id="cd23767">
    <property type="entry name" value="IQCD"/>
    <property type="match status" value="1"/>
</dbReference>
<dbReference type="InterPro" id="IPR025064">
    <property type="entry name" value="DUF4005"/>
</dbReference>
<dbReference type="InterPro" id="IPR000048">
    <property type="entry name" value="IQ_motif_EF-hand-BS"/>
</dbReference>
<dbReference type="PANTHER" id="PTHR32295">
    <property type="entry name" value="IQ-DOMAIN 5-RELATED"/>
    <property type="match status" value="1"/>
</dbReference>
<dbReference type="PANTHER" id="PTHR32295:SF269">
    <property type="entry name" value="PROTEIN IQ-DOMAIN 28"/>
    <property type="match status" value="1"/>
</dbReference>
<dbReference type="Pfam" id="PF13178">
    <property type="entry name" value="DUF4005"/>
    <property type="match status" value="1"/>
</dbReference>
<dbReference type="Pfam" id="PF00612">
    <property type="entry name" value="IQ"/>
    <property type="match status" value="2"/>
</dbReference>
<dbReference type="SMART" id="SM00015">
    <property type="entry name" value="IQ"/>
    <property type="match status" value="2"/>
</dbReference>
<dbReference type="PROSITE" id="PS50096">
    <property type="entry name" value="IQ"/>
    <property type="match status" value="2"/>
</dbReference>
<sequence length="664" mass="72849">MGKTPGKWIKTLLLGKKSPKSNSDNRSQKLKSAKKEELVESVTEDLSNLTVDPPVVSSQPVPASTAQNVVSPINGDESKDNLESRNDLGEVELEQAAIKVQATFRAHQARRAFRTLKGIIRLQAVIRGHLVRRQAIATYSCIWGIVKFQALVRGQKARSSDIAIQFQKKHMEASDSEVLQSSTCSWMDNPTKFVFVDKLLASSPTALPLKIQYGPEEPNSAKVWLERWTQLQVWSSGSRVPRIEIPKSQSKKRNYQAVVEAEKKRPKRSIKKPSGTTSGTGPSRFTAERNKPKRNVRKASTLSKDPLRNESDKANHNSRKSRSGSKEGSPLEIKDEKPSPSLKRSSLSNGSKKATLRSAEKKKKDIPDSSVQIQPEGKVSENVLEGGDNIEFAEKEKDTTDSVQIESEGKVSGNVLEGGEGENIVFTEKEKDTADPVQIEPERKVLEEGDNIESSGKEKDTGDSVQIESEGKVLEGGDNIEFGEKEKDKADAVPIEFDIVKDEKSPVLDRTEEDELKTAETSDKAEALKCADVKVSSENGNVGSDNTKQSEKRALLPANIDKQDDGLTLSGRKIPSYMAPTASAKARVKGEASPRFAQAKTEINGALRRHSLPSPANGKLSTTTMSPRAQKLLLASAKGSMNGDKSFTSSKDITHKSTRTDWKR</sequence>
<gene>
    <name evidence="7" type="primary">IQD28</name>
    <name evidence="9" type="ordered locus">At1g14380</name>
    <name evidence="10" type="ORF">F14L17.15</name>
</gene>